<gene>
    <name evidence="1" type="primary">mutS2</name>
    <name evidence="1" type="synonym">rqcU</name>
    <name type="ordered locus">NT01CX_1773</name>
</gene>
<feature type="chain" id="PRO_1000093352" description="Endonuclease MutS2">
    <location>
        <begin position="1"/>
        <end position="785"/>
    </location>
</feature>
<feature type="domain" description="Smr" evidence="1">
    <location>
        <begin position="710"/>
        <end position="785"/>
    </location>
</feature>
<feature type="binding site" evidence="1">
    <location>
        <begin position="332"/>
        <end position="339"/>
    </location>
    <ligand>
        <name>ATP</name>
        <dbReference type="ChEBI" id="CHEBI:30616"/>
    </ligand>
</feature>
<dbReference type="EC" id="3.1.-.-" evidence="1"/>
<dbReference type="EC" id="3.6.4.-" evidence="1"/>
<dbReference type="EMBL" id="CP000382">
    <property type="protein sequence ID" value="ABK61971.1"/>
    <property type="molecule type" value="Genomic_DNA"/>
</dbReference>
<dbReference type="RefSeq" id="WP_011721851.1">
    <property type="nucleotide sequence ID" value="NC_008593.1"/>
</dbReference>
<dbReference type="SMR" id="A0PZP4"/>
<dbReference type="STRING" id="386415.NT01CX_1773"/>
<dbReference type="KEGG" id="cno:NT01CX_1773"/>
<dbReference type="PATRIC" id="fig|386415.7.peg.876"/>
<dbReference type="eggNOG" id="COG1193">
    <property type="taxonomic scope" value="Bacteria"/>
</dbReference>
<dbReference type="HOGENOM" id="CLU_011252_2_1_9"/>
<dbReference type="Proteomes" id="UP000008220">
    <property type="component" value="Chromosome"/>
</dbReference>
<dbReference type="GO" id="GO:0005524">
    <property type="term" value="F:ATP binding"/>
    <property type="evidence" value="ECO:0007669"/>
    <property type="project" value="UniProtKB-UniRule"/>
</dbReference>
<dbReference type="GO" id="GO:0016887">
    <property type="term" value="F:ATP hydrolysis activity"/>
    <property type="evidence" value="ECO:0007669"/>
    <property type="project" value="InterPro"/>
</dbReference>
<dbReference type="GO" id="GO:0140664">
    <property type="term" value="F:ATP-dependent DNA damage sensor activity"/>
    <property type="evidence" value="ECO:0007669"/>
    <property type="project" value="InterPro"/>
</dbReference>
<dbReference type="GO" id="GO:0004519">
    <property type="term" value="F:endonuclease activity"/>
    <property type="evidence" value="ECO:0007669"/>
    <property type="project" value="UniProtKB-UniRule"/>
</dbReference>
<dbReference type="GO" id="GO:0030983">
    <property type="term" value="F:mismatched DNA binding"/>
    <property type="evidence" value="ECO:0007669"/>
    <property type="project" value="InterPro"/>
</dbReference>
<dbReference type="GO" id="GO:0043023">
    <property type="term" value="F:ribosomal large subunit binding"/>
    <property type="evidence" value="ECO:0007669"/>
    <property type="project" value="UniProtKB-UniRule"/>
</dbReference>
<dbReference type="GO" id="GO:0019843">
    <property type="term" value="F:rRNA binding"/>
    <property type="evidence" value="ECO:0007669"/>
    <property type="project" value="UniProtKB-UniRule"/>
</dbReference>
<dbReference type="GO" id="GO:0006298">
    <property type="term" value="P:mismatch repair"/>
    <property type="evidence" value="ECO:0007669"/>
    <property type="project" value="InterPro"/>
</dbReference>
<dbReference type="GO" id="GO:0045910">
    <property type="term" value="P:negative regulation of DNA recombination"/>
    <property type="evidence" value="ECO:0007669"/>
    <property type="project" value="InterPro"/>
</dbReference>
<dbReference type="GO" id="GO:0072344">
    <property type="term" value="P:rescue of stalled ribosome"/>
    <property type="evidence" value="ECO:0007669"/>
    <property type="project" value="UniProtKB-UniRule"/>
</dbReference>
<dbReference type="CDD" id="cd03280">
    <property type="entry name" value="ABC_MutS2"/>
    <property type="match status" value="1"/>
</dbReference>
<dbReference type="CDD" id="cd06503">
    <property type="entry name" value="ATP-synt_Fo_b"/>
    <property type="match status" value="1"/>
</dbReference>
<dbReference type="FunFam" id="3.30.1370.110:FF:000007">
    <property type="entry name" value="Endonuclease MutS2"/>
    <property type="match status" value="1"/>
</dbReference>
<dbReference type="FunFam" id="3.40.50.300:FF:000830">
    <property type="entry name" value="Endonuclease MutS2"/>
    <property type="match status" value="1"/>
</dbReference>
<dbReference type="Gene3D" id="3.30.1370.110">
    <property type="match status" value="1"/>
</dbReference>
<dbReference type="Gene3D" id="3.40.50.300">
    <property type="entry name" value="P-loop containing nucleotide triphosphate hydrolases"/>
    <property type="match status" value="1"/>
</dbReference>
<dbReference type="HAMAP" id="MF_00092">
    <property type="entry name" value="MutS2"/>
    <property type="match status" value="1"/>
</dbReference>
<dbReference type="InterPro" id="IPR000432">
    <property type="entry name" value="DNA_mismatch_repair_MutS_C"/>
</dbReference>
<dbReference type="InterPro" id="IPR007696">
    <property type="entry name" value="DNA_mismatch_repair_MutS_core"/>
</dbReference>
<dbReference type="InterPro" id="IPR036187">
    <property type="entry name" value="DNA_mismatch_repair_MutS_sf"/>
</dbReference>
<dbReference type="InterPro" id="IPR046893">
    <property type="entry name" value="MSSS"/>
</dbReference>
<dbReference type="InterPro" id="IPR045076">
    <property type="entry name" value="MutS"/>
</dbReference>
<dbReference type="InterPro" id="IPR005747">
    <property type="entry name" value="MutS2"/>
</dbReference>
<dbReference type="InterPro" id="IPR027417">
    <property type="entry name" value="P-loop_NTPase"/>
</dbReference>
<dbReference type="InterPro" id="IPR002625">
    <property type="entry name" value="Smr_dom"/>
</dbReference>
<dbReference type="InterPro" id="IPR036063">
    <property type="entry name" value="Smr_dom_sf"/>
</dbReference>
<dbReference type="NCBIfam" id="TIGR01069">
    <property type="entry name" value="mutS2"/>
    <property type="match status" value="1"/>
</dbReference>
<dbReference type="PANTHER" id="PTHR48466:SF2">
    <property type="entry name" value="OS10G0509000 PROTEIN"/>
    <property type="match status" value="1"/>
</dbReference>
<dbReference type="PANTHER" id="PTHR48466">
    <property type="entry name" value="OS10G0509000 PROTEIN-RELATED"/>
    <property type="match status" value="1"/>
</dbReference>
<dbReference type="Pfam" id="PF20297">
    <property type="entry name" value="MSSS"/>
    <property type="match status" value="1"/>
</dbReference>
<dbReference type="Pfam" id="PF00488">
    <property type="entry name" value="MutS_V"/>
    <property type="match status" value="1"/>
</dbReference>
<dbReference type="Pfam" id="PF01713">
    <property type="entry name" value="Smr"/>
    <property type="match status" value="1"/>
</dbReference>
<dbReference type="PIRSF" id="PIRSF005814">
    <property type="entry name" value="MutS_YshD"/>
    <property type="match status" value="1"/>
</dbReference>
<dbReference type="SMART" id="SM00534">
    <property type="entry name" value="MUTSac"/>
    <property type="match status" value="1"/>
</dbReference>
<dbReference type="SMART" id="SM00533">
    <property type="entry name" value="MUTSd"/>
    <property type="match status" value="1"/>
</dbReference>
<dbReference type="SMART" id="SM00463">
    <property type="entry name" value="SMR"/>
    <property type="match status" value="1"/>
</dbReference>
<dbReference type="SUPFAM" id="SSF48334">
    <property type="entry name" value="DNA repair protein MutS, domain III"/>
    <property type="match status" value="1"/>
</dbReference>
<dbReference type="SUPFAM" id="SSF52540">
    <property type="entry name" value="P-loop containing nucleoside triphosphate hydrolases"/>
    <property type="match status" value="1"/>
</dbReference>
<dbReference type="SUPFAM" id="SSF160443">
    <property type="entry name" value="SMR domain-like"/>
    <property type="match status" value="1"/>
</dbReference>
<dbReference type="PROSITE" id="PS00486">
    <property type="entry name" value="DNA_MISMATCH_REPAIR_2"/>
    <property type="match status" value="1"/>
</dbReference>
<dbReference type="PROSITE" id="PS50828">
    <property type="entry name" value="SMR"/>
    <property type="match status" value="1"/>
</dbReference>
<organism>
    <name type="scientific">Clostridium novyi (strain NT)</name>
    <dbReference type="NCBI Taxonomy" id="386415"/>
    <lineage>
        <taxon>Bacteria</taxon>
        <taxon>Bacillati</taxon>
        <taxon>Bacillota</taxon>
        <taxon>Clostridia</taxon>
        <taxon>Eubacteriales</taxon>
        <taxon>Clostridiaceae</taxon>
        <taxon>Clostridium</taxon>
    </lineage>
</organism>
<comment type="function">
    <text evidence="1">Endonuclease that is involved in the suppression of homologous recombination and thus may have a key role in the control of bacterial genetic diversity.</text>
</comment>
<comment type="function">
    <text evidence="1">Acts as a ribosome collision sensor, splitting the ribosome into its 2 subunits. Detects stalled/collided 70S ribosomes which it binds and splits by an ATP-hydrolysis driven conformational change. Acts upstream of the ribosome quality control system (RQC), a ribosome-associated complex that mediates the extraction of incompletely synthesized nascent chains from stalled ribosomes and their subsequent degradation. Probably generates substrates for RQC.</text>
</comment>
<comment type="subunit">
    <text evidence="1">Homodimer. Binds to stalled ribosomes, contacting rRNA.</text>
</comment>
<comment type="similarity">
    <text evidence="1">Belongs to the DNA mismatch repair MutS family. MutS2 subfamily.</text>
</comment>
<proteinExistence type="inferred from homology"/>
<protein>
    <recommendedName>
        <fullName evidence="1">Endonuclease MutS2</fullName>
        <ecNumber evidence="1">3.1.-.-</ecNumber>
    </recommendedName>
    <alternativeName>
        <fullName evidence="1">Ribosome-associated protein quality control-upstream factor</fullName>
        <shortName evidence="1">RQC-upstream factor</shortName>
        <shortName evidence="1">RqcU</shortName>
        <ecNumber evidence="1">3.6.4.-</ecNumber>
    </alternativeName>
</protein>
<accession>A0PZP4</accession>
<reference key="1">
    <citation type="journal article" date="2006" name="Nat. Biotechnol.">
        <title>The genome and transcriptomes of the anti-tumor agent Clostridium novyi-NT.</title>
        <authorList>
            <person name="Bettegowda C."/>
            <person name="Huang X."/>
            <person name="Lin J."/>
            <person name="Cheong I."/>
            <person name="Kohli M."/>
            <person name="Szabo S.A."/>
            <person name="Zhang X."/>
            <person name="Diaz L.A. Jr."/>
            <person name="Velculescu V.E."/>
            <person name="Parmigiani G."/>
            <person name="Kinzler K.W."/>
            <person name="Vogelstein B."/>
            <person name="Zhou S."/>
        </authorList>
    </citation>
    <scope>NUCLEOTIDE SEQUENCE [LARGE SCALE GENOMIC DNA]</scope>
    <source>
        <strain>NT</strain>
    </source>
</reference>
<keyword id="KW-0067">ATP-binding</keyword>
<keyword id="KW-0238">DNA-binding</keyword>
<keyword id="KW-0255">Endonuclease</keyword>
<keyword id="KW-0378">Hydrolase</keyword>
<keyword id="KW-0540">Nuclease</keyword>
<keyword id="KW-0547">Nucleotide-binding</keyword>
<keyword id="KW-1185">Reference proteome</keyword>
<keyword id="KW-0694">RNA-binding</keyword>
<keyword id="KW-0699">rRNA-binding</keyword>
<sequence length="785" mass="88380">MNEKSLRVLEFNKIKDELKKYTQTSAAKDLIERLHPYESAYEVREHLMETEEAFKISIKKGDAPFSGLYDIREAISKAQRRFTLFPSELLRVANLLRASRRFKGYVKSDDLSEKYEVLESITEGLVPLNGLEEEISKCIIGEEEISDRASTTLFNIRRSLKDKTSSIKARVNSLIRTYSSHLQENIYTVRGERYVLPVKVEHKGAVPGLVHDQSASGATLFIEPMSLVDLNNEIKELRLKEKAEIDRILAFLSGKVYENVDVIKVDADILWELDFIFAKAKYAQKLGAIMPIISEDGHFNIINAKHPLIDPKKVVENNIYLRDGITSVVITGPNTGGKTVTLKTVGLLHIMAMSGLMITASQGSTISFFKEVFADIGDEQSIEQSLSTFSSHMTNIVNIIDSADENSLVLFDELGAGTDPTEGAALAVSILENLRKRKTKVIATTHYSELKAYALKVDNVENASVEFDVETLRPTYRLLIGVPGKSNAFEISKRLGLPDYIIEDAREGISEETLKFEDLIQSLQHKNIKAQEHARKAESAKEEAVKLKEKYESKLDKFQDIREKAILNAQKEAKEIIKEAKEEADKILKDIRELERMGYSSDVRKLLEENRKKLKDKLEKTESKLNQPKEVGEAVTNVSEGDELYLPKFETKVMVLTNPDNKGDVQVQAGIMKIKVNIKDLRKTKETKIEKRQRKKKQMSLNLKSVATSVDLRGMDSEEATYTADKYLDDACMSGLSEVTIIHGKGTGVLRTAINDMLKRHPHVKSYRLGNYGEGGNGVTVVELK</sequence>
<evidence type="ECO:0000255" key="1">
    <source>
        <dbReference type="HAMAP-Rule" id="MF_00092"/>
    </source>
</evidence>
<name>MUTS2_CLONN</name>